<reference key="1">
    <citation type="journal article" date="2003" name="Proc. Natl. Acad. Sci. U.S.A.">
        <title>The complete genome sequence of Mycobacterium bovis.</title>
        <authorList>
            <person name="Garnier T."/>
            <person name="Eiglmeier K."/>
            <person name="Camus J.-C."/>
            <person name="Medina N."/>
            <person name="Mansoor H."/>
            <person name="Pryor M."/>
            <person name="Duthoy S."/>
            <person name="Grondin S."/>
            <person name="Lacroix C."/>
            <person name="Monsempe C."/>
            <person name="Simon S."/>
            <person name="Harris B."/>
            <person name="Atkin R."/>
            <person name="Doggett J."/>
            <person name="Mayes R."/>
            <person name="Keating L."/>
            <person name="Wheeler P.R."/>
            <person name="Parkhill J."/>
            <person name="Barrell B.G."/>
            <person name="Cole S.T."/>
            <person name="Gordon S.V."/>
            <person name="Hewinson R.G."/>
        </authorList>
    </citation>
    <scope>NUCLEOTIDE SEQUENCE [LARGE SCALE GENOMIC DNA]</scope>
    <source>
        <strain>ATCC BAA-935 / AF2122/97</strain>
    </source>
</reference>
<reference key="2">
    <citation type="journal article" date="2017" name="Genome Announc.">
        <title>Updated reference genome sequence and annotation of Mycobacterium bovis AF2122/97.</title>
        <authorList>
            <person name="Malone K.M."/>
            <person name="Farrell D."/>
            <person name="Stuber T.P."/>
            <person name="Schubert O.T."/>
            <person name="Aebersold R."/>
            <person name="Robbe-Austerman S."/>
            <person name="Gordon S.V."/>
        </authorList>
    </citation>
    <scope>NUCLEOTIDE SEQUENCE [LARGE SCALE GENOMIC DNA]</scope>
    <scope>GENOME REANNOTATION</scope>
    <source>
        <strain>ATCC BAA-935 / AF2122/97</strain>
    </source>
</reference>
<accession>P64264</accession>
<accession>A0A1R3XYU7</accession>
<accession>Q11038</accession>
<accession>X2BH98</accession>
<evidence type="ECO:0000250" key="1"/>
<evidence type="ECO:0000250" key="2">
    <source>
        <dbReference type="UniProtKB" id="E4QP00"/>
    </source>
</evidence>
<evidence type="ECO:0000255" key="3"/>
<evidence type="ECO:0000305" key="4"/>
<keyword id="KW-0274">FAD</keyword>
<keyword id="KW-0285">Flavoprotein</keyword>
<keyword id="KW-0560">Oxidoreductase</keyword>
<keyword id="KW-1185">Reference proteome</keyword>
<proteinExistence type="inferred from homology"/>
<dbReference type="EC" id="1.1.-.-"/>
<dbReference type="EMBL" id="LT708304">
    <property type="protein sequence ID" value="SIT99913.1"/>
    <property type="molecule type" value="Genomic_DNA"/>
</dbReference>
<dbReference type="RefSeq" id="NP_854964.1">
    <property type="nucleotide sequence ID" value="NC_002945.3"/>
</dbReference>
<dbReference type="RefSeq" id="WP_003406598.1">
    <property type="nucleotide sequence ID" value="NC_002945.4"/>
</dbReference>
<dbReference type="SMR" id="P64264"/>
<dbReference type="CAZy" id="AA3">
    <property type="family name" value="Auxiliary Activities 3"/>
</dbReference>
<dbReference type="KEGG" id="mbo:BQ2027_MB1310"/>
<dbReference type="PATRIC" id="fig|233413.5.peg.1435"/>
<dbReference type="Proteomes" id="UP000001419">
    <property type="component" value="Chromosome"/>
</dbReference>
<dbReference type="GO" id="GO:0050660">
    <property type="term" value="F:flavin adenine dinucleotide binding"/>
    <property type="evidence" value="ECO:0007669"/>
    <property type="project" value="InterPro"/>
</dbReference>
<dbReference type="GO" id="GO:0016614">
    <property type="term" value="F:oxidoreductase activity, acting on CH-OH group of donors"/>
    <property type="evidence" value="ECO:0007669"/>
    <property type="project" value="InterPro"/>
</dbReference>
<dbReference type="Gene3D" id="3.50.50.60">
    <property type="entry name" value="FAD/NAD(P)-binding domain"/>
    <property type="match status" value="1"/>
</dbReference>
<dbReference type="Gene3D" id="3.30.560.10">
    <property type="entry name" value="Glucose Oxidase, domain 3"/>
    <property type="match status" value="1"/>
</dbReference>
<dbReference type="InterPro" id="IPR036188">
    <property type="entry name" value="FAD/NAD-bd_sf"/>
</dbReference>
<dbReference type="InterPro" id="IPR012132">
    <property type="entry name" value="GMC_OxRdtase"/>
</dbReference>
<dbReference type="InterPro" id="IPR000172">
    <property type="entry name" value="GMC_OxRdtase_N"/>
</dbReference>
<dbReference type="InterPro" id="IPR007867">
    <property type="entry name" value="GMC_OxRtase_C"/>
</dbReference>
<dbReference type="PANTHER" id="PTHR11552:SF147">
    <property type="entry name" value="CHOLINE DEHYDROGENASE, MITOCHONDRIAL"/>
    <property type="match status" value="1"/>
</dbReference>
<dbReference type="PANTHER" id="PTHR11552">
    <property type="entry name" value="GLUCOSE-METHANOL-CHOLINE GMC OXIDOREDUCTASE"/>
    <property type="match status" value="1"/>
</dbReference>
<dbReference type="Pfam" id="PF05199">
    <property type="entry name" value="GMC_oxred_C"/>
    <property type="match status" value="1"/>
</dbReference>
<dbReference type="Pfam" id="PF00732">
    <property type="entry name" value="GMC_oxred_N"/>
    <property type="match status" value="1"/>
</dbReference>
<dbReference type="PIRSF" id="PIRSF000137">
    <property type="entry name" value="Alcohol_oxidase"/>
    <property type="match status" value="1"/>
</dbReference>
<dbReference type="SUPFAM" id="SSF54373">
    <property type="entry name" value="FAD-linked reductases, C-terminal domain"/>
    <property type="match status" value="1"/>
</dbReference>
<dbReference type="SUPFAM" id="SSF51905">
    <property type="entry name" value="FAD/NAD(P)-binding domain"/>
    <property type="match status" value="1"/>
</dbReference>
<dbReference type="PROSITE" id="PS00623">
    <property type="entry name" value="GMC_OXRED_1"/>
    <property type="match status" value="1"/>
</dbReference>
<dbReference type="PROSITE" id="PS00624">
    <property type="entry name" value="GMC_OXRED_2"/>
    <property type="match status" value="1"/>
</dbReference>
<protein>
    <recommendedName>
        <fullName>Uncharacterized GMC-type oxidoreductase Mb1310</fullName>
        <ecNumber>1.1.-.-</ecNumber>
    </recommendedName>
</protein>
<name>Y1310_MYCBO</name>
<sequence>MDTQSDYVVVGTGSAGAVVASRLSTDPATTVVALEAGPRDKNRFIGVPAAFSKLFRSEIDWDYLTEPQPELDGREIYWPRGKVLGGSSSMNAMMWVRGFASDYDEWAARAGPRWSYADVLGYFRRIENVTAAWHFVSGDDSGVTGPLHISRQRSPRSVTAAWLAAARECGFAAARPNSPRPEGFCETVVTQRRGARFSTADAYLKPAMRRKNLRVLTGATATRVVIDGDRAVGVEYQSDGQTRIVYARREVVLCAGAVNSPQLLMLSGIGDRDHLAEHDIDTVYHAPEVGCNLLDHLVTVLGFDVEKDSLFAAEKPGQLISYLLRRRGMLTSNVGEAYGFVRSRPELKLPDLELIFAPAPFYDEALVPPAGHGVVFGPILVAPQSRGQITLRSADPHAKPVIEPRYLSDLGGVDRAAMMAGLRICARIAQARPLRDLLGSIARPRNSTELDEATLELALATCSHTLYHPMGTCRMGSDEASVVDPQLRVRGVDGLRVADASVMPSTVRGHTHAPSVLIGEKAADLIRS</sequence>
<gene>
    <name type="ordered locus">BQ2027_MB1310</name>
</gene>
<comment type="cofactor">
    <cofactor evidence="1">
        <name>FAD</name>
        <dbReference type="ChEBI" id="CHEBI:57692"/>
    </cofactor>
</comment>
<comment type="similarity">
    <text evidence="4">Belongs to the GMC oxidoreductase family.</text>
</comment>
<feature type="chain" id="PRO_0000205617" description="Uncharacterized GMC-type oxidoreductase Mb1310">
    <location>
        <begin position="1"/>
        <end position="528"/>
    </location>
</feature>
<feature type="active site" description="Proton acceptor" evidence="2">
    <location>
        <position position="468"/>
    </location>
</feature>
<feature type="binding site" evidence="3">
    <location>
        <begin position="6"/>
        <end position="35"/>
    </location>
    <ligand>
        <name>FAD</name>
        <dbReference type="ChEBI" id="CHEBI:57692"/>
    </ligand>
</feature>
<organism>
    <name type="scientific">Mycobacterium bovis (strain ATCC BAA-935 / AF2122/97)</name>
    <dbReference type="NCBI Taxonomy" id="233413"/>
    <lineage>
        <taxon>Bacteria</taxon>
        <taxon>Bacillati</taxon>
        <taxon>Actinomycetota</taxon>
        <taxon>Actinomycetes</taxon>
        <taxon>Mycobacteriales</taxon>
        <taxon>Mycobacteriaceae</taxon>
        <taxon>Mycobacterium</taxon>
        <taxon>Mycobacterium tuberculosis complex</taxon>
    </lineage>
</organism>